<accession>G5EE86</accession>
<accession>B6VQ91</accession>
<sequence length="409" mass="45653">MYFQSLSADPLDSVNTTTDFNQLAQLLLMLTNSSSKETIATHVVTNSVPSAFQFDWSSHFKEEYDLVEKLNSPQYTNLTSISPSSSTDSNNLILRQIQIPKIEPALLNQCCLCTFAIVDKEISVVDGKYYHNNCLRCQMCDIPFEYSDKCYVRDGVFLCRADHAKRYQKCCRKCEIPLNREDMVMKAKEMIFHHACFVCFICGIKLNPGDYYTMSPQGHLYCHAHYNAVRSTVLCEEAAVATVPAVVAPPPPPPTTTTAPPPAAPEQPPREASTEAEASTDEDGNGSGSQRSKRMRTSFKHHQLRAMKTYFALNHNPDAKDLKQLAAKTNLTKRVLQVWFQNARAKYRRELHDGGRSSSPLCVSAPLASMDMNPPLSSSSSGHSTDGYQLNTPPLSSEIYSPNSNYTHL</sequence>
<protein>
    <recommendedName>
        <fullName evidence="11">LIM/homeobox protein ttx-3</fullName>
    </recommendedName>
    <alternativeName>
        <fullName>Abnormal thermotaxis protein 3</fullName>
    </alternativeName>
</protein>
<name>TTX3_CAEEL</name>
<keyword id="KW-0025">Alternative splicing</keyword>
<keyword id="KW-0966">Cell projection</keyword>
<keyword id="KW-0238">DNA-binding</keyword>
<keyword id="KW-0371">Homeobox</keyword>
<keyword id="KW-0440">LIM domain</keyword>
<keyword id="KW-0479">Metal-binding</keyword>
<keyword id="KW-0539">Nucleus</keyword>
<keyword id="KW-1185">Reference proteome</keyword>
<keyword id="KW-0677">Repeat</keyword>
<keyword id="KW-0804">Transcription</keyword>
<keyword id="KW-0805">Transcription regulation</keyword>
<keyword id="KW-0862">Zinc</keyword>
<evidence type="ECO:0000255" key="1">
    <source>
        <dbReference type="PROSITE-ProRule" id="PRU00108"/>
    </source>
</evidence>
<evidence type="ECO:0000255" key="2">
    <source>
        <dbReference type="PROSITE-ProRule" id="PRU00125"/>
    </source>
</evidence>
<evidence type="ECO:0000256" key="3">
    <source>
        <dbReference type="SAM" id="MobiDB-lite"/>
    </source>
</evidence>
<evidence type="ECO:0000269" key="4">
    <source>
    </source>
</evidence>
<evidence type="ECO:0000269" key="5">
    <source>
    </source>
</evidence>
<evidence type="ECO:0000269" key="6">
    <source>
    </source>
</evidence>
<evidence type="ECO:0000269" key="7">
    <source>
    </source>
</evidence>
<evidence type="ECO:0000269" key="8">
    <source>
    </source>
</evidence>
<evidence type="ECO:0000269" key="9">
    <source>
    </source>
</evidence>
<evidence type="ECO:0000269" key="10">
    <source>
    </source>
</evidence>
<evidence type="ECO:0000303" key="11">
    <source>
    </source>
</evidence>
<evidence type="ECO:0000303" key="12">
    <source>
    </source>
</evidence>
<evidence type="ECO:0000305" key="13"/>
<evidence type="ECO:0000305" key="14">
    <source>
    </source>
</evidence>
<evidence type="ECO:0000312" key="15">
    <source>
        <dbReference type="EMBL" id="AAB97099.1"/>
    </source>
</evidence>
<evidence type="ECO:0000312" key="16">
    <source>
        <dbReference type="EMBL" id="CAB03956.3"/>
    </source>
</evidence>
<evidence type="ECO:0000312" key="17">
    <source>
        <dbReference type="WormBase" id="C40H5.5a"/>
    </source>
</evidence>
<proteinExistence type="evidence at protein level"/>
<feature type="chain" id="PRO_0000428997" description="LIM/homeobox protein ttx-3">
    <location>
        <begin position="1"/>
        <end position="409"/>
    </location>
</feature>
<feature type="domain" description="LIM zinc-binding 1" evidence="2">
    <location>
        <begin position="108"/>
        <end position="169"/>
    </location>
</feature>
<feature type="domain" description="LIM zinc-binding 2" evidence="2">
    <location>
        <begin position="171"/>
        <end position="232"/>
    </location>
</feature>
<feature type="DNA-binding region" description="Homeobox" evidence="1">
    <location>
        <begin position="292"/>
        <end position="351"/>
    </location>
</feature>
<feature type="region of interest" description="Disordered" evidence="3">
    <location>
        <begin position="245"/>
        <end position="299"/>
    </location>
</feature>
<feature type="region of interest" description="Disordered" evidence="3">
    <location>
        <begin position="372"/>
        <end position="409"/>
    </location>
</feature>
<feature type="compositionally biased region" description="Pro residues" evidence="3">
    <location>
        <begin position="247"/>
        <end position="267"/>
    </location>
</feature>
<feature type="compositionally biased region" description="Polar residues" evidence="3">
    <location>
        <begin position="382"/>
        <end position="409"/>
    </location>
</feature>
<feature type="splice variant" id="VSP_054579" description="In isoform b." evidence="12">
    <location>
        <begin position="1"/>
        <end position="28"/>
    </location>
</feature>
<feature type="mutagenesis site" description="In mg158; thermotaxis defects with animals displaying cryophilic behavior." evidence="4">
    <original>F</original>
    <variation>I</variation>
    <location>
        <position position="340"/>
    </location>
</feature>
<dbReference type="EMBL" id="U72211">
    <property type="protein sequence ID" value="AAB97099.1"/>
    <property type="molecule type" value="mRNA"/>
</dbReference>
<dbReference type="EMBL" id="Z81482">
    <property type="protein sequence ID" value="CAB03956.3"/>
    <property type="molecule type" value="Genomic_DNA"/>
</dbReference>
<dbReference type="EMBL" id="Z81482">
    <property type="protein sequence ID" value="CAR97817.1"/>
    <property type="molecule type" value="Genomic_DNA"/>
</dbReference>
<dbReference type="PIR" id="T19871">
    <property type="entry name" value="T19871"/>
</dbReference>
<dbReference type="RefSeq" id="NP_001257168.1">
    <molecule id="G5EE86-1"/>
    <property type="nucleotide sequence ID" value="NM_001270239.2"/>
</dbReference>
<dbReference type="RefSeq" id="NP_001257169.1">
    <molecule id="G5EE86-2"/>
    <property type="nucleotide sequence ID" value="NM_001270240.3"/>
</dbReference>
<dbReference type="SMR" id="G5EE86"/>
<dbReference type="BioGRID" id="46265">
    <property type="interactions" value="1"/>
</dbReference>
<dbReference type="FunCoup" id="G5EE86">
    <property type="interactions" value="898"/>
</dbReference>
<dbReference type="STRING" id="6239.C40H5.5a.1"/>
<dbReference type="PaxDb" id="6239-C40H5.5a"/>
<dbReference type="EnsemblMetazoa" id="C40H5.5a.1">
    <molecule id="G5EE86-1"/>
    <property type="protein sequence ID" value="C40H5.5a.1"/>
    <property type="gene ID" value="WBGene00006654"/>
</dbReference>
<dbReference type="EnsemblMetazoa" id="C40H5.5b.1">
    <molecule id="G5EE86-2"/>
    <property type="protein sequence ID" value="C40H5.5b.1"/>
    <property type="gene ID" value="WBGene00006654"/>
</dbReference>
<dbReference type="GeneID" id="181357"/>
<dbReference type="KEGG" id="cel:CELE_C40H5.5"/>
<dbReference type="AGR" id="WB:WBGene00006654"/>
<dbReference type="CTD" id="181357"/>
<dbReference type="WormBase" id="C40H5.5a">
    <molecule id="G5EE86-1"/>
    <property type="protein sequence ID" value="CE27107"/>
    <property type="gene ID" value="WBGene00006654"/>
    <property type="gene designation" value="ttx-3"/>
</dbReference>
<dbReference type="WormBase" id="C40H5.5b">
    <molecule id="G5EE86-2"/>
    <property type="protein sequence ID" value="CE43132"/>
    <property type="gene ID" value="WBGene00006654"/>
    <property type="gene designation" value="ttx-3"/>
</dbReference>
<dbReference type="eggNOG" id="KOG0490">
    <property type="taxonomic scope" value="Eukaryota"/>
</dbReference>
<dbReference type="GeneTree" id="ENSGT00940000165771"/>
<dbReference type="InParanoid" id="G5EE86"/>
<dbReference type="OMA" id="DYANCTT"/>
<dbReference type="OrthoDB" id="9990008at2759"/>
<dbReference type="PhylomeDB" id="G5EE86"/>
<dbReference type="PRO" id="PR:G5EE86"/>
<dbReference type="Proteomes" id="UP000001940">
    <property type="component" value="Chromosome X"/>
</dbReference>
<dbReference type="Bgee" id="WBGene00006654">
    <property type="expression patterns" value="Expressed in pharyngeal muscle cell (C elegans) and 2 other cell types or tissues"/>
</dbReference>
<dbReference type="GO" id="GO:0030424">
    <property type="term" value="C:axon"/>
    <property type="evidence" value="ECO:0007669"/>
    <property type="project" value="UniProtKB-SubCell"/>
</dbReference>
<dbReference type="GO" id="GO:0005634">
    <property type="term" value="C:nucleus"/>
    <property type="evidence" value="ECO:0000250"/>
    <property type="project" value="WormBase"/>
</dbReference>
<dbReference type="GO" id="GO:0043204">
    <property type="term" value="C:perikaryon"/>
    <property type="evidence" value="ECO:0007669"/>
    <property type="project" value="UniProtKB-SubCell"/>
</dbReference>
<dbReference type="GO" id="GO:0001228">
    <property type="term" value="F:DNA-binding transcription activator activity, RNA polymerase II-specific"/>
    <property type="evidence" value="ECO:0000315"/>
    <property type="project" value="UniProtKB"/>
</dbReference>
<dbReference type="GO" id="GO:0000981">
    <property type="term" value="F:DNA-binding transcription factor activity, RNA polymerase II-specific"/>
    <property type="evidence" value="ECO:0000318"/>
    <property type="project" value="GO_Central"/>
</dbReference>
<dbReference type="GO" id="GO:0046872">
    <property type="term" value="F:metal ion binding"/>
    <property type="evidence" value="ECO:0007669"/>
    <property type="project" value="UniProtKB-KW"/>
</dbReference>
<dbReference type="GO" id="GO:0000978">
    <property type="term" value="F:RNA polymerase II cis-regulatory region sequence-specific DNA binding"/>
    <property type="evidence" value="ECO:0000314"/>
    <property type="project" value="UniProtKB"/>
</dbReference>
<dbReference type="GO" id="GO:0000977">
    <property type="term" value="F:RNA polymerase II transcription regulatory region sequence-specific DNA binding"/>
    <property type="evidence" value="ECO:0000314"/>
    <property type="project" value="WormBase"/>
</dbReference>
<dbReference type="GO" id="GO:0008306">
    <property type="term" value="P:associative learning"/>
    <property type="evidence" value="ECO:0000315"/>
    <property type="project" value="WormBase"/>
</dbReference>
<dbReference type="GO" id="GO:0007409">
    <property type="term" value="P:axonogenesis"/>
    <property type="evidence" value="ECO:0000315"/>
    <property type="project" value="WormBase"/>
</dbReference>
<dbReference type="GO" id="GO:0040024">
    <property type="term" value="P:dauer larval development"/>
    <property type="evidence" value="ECO:0000316"/>
    <property type="project" value="WormBase"/>
</dbReference>
<dbReference type="GO" id="GO:0022401">
    <property type="term" value="P:negative adaptation of signaling pathway"/>
    <property type="evidence" value="ECO:0000315"/>
    <property type="project" value="WormBase"/>
</dbReference>
<dbReference type="GO" id="GO:0030182">
    <property type="term" value="P:neuron differentiation"/>
    <property type="evidence" value="ECO:0000315"/>
    <property type="project" value="UniProtKB"/>
</dbReference>
<dbReference type="GO" id="GO:0008355">
    <property type="term" value="P:olfactory learning"/>
    <property type="evidence" value="ECO:0000315"/>
    <property type="project" value="WormBase"/>
</dbReference>
<dbReference type="GO" id="GO:0061066">
    <property type="term" value="P:positive regulation of dauer larval development"/>
    <property type="evidence" value="ECO:0000316"/>
    <property type="project" value="WormBase"/>
</dbReference>
<dbReference type="GO" id="GO:0045893">
    <property type="term" value="P:positive regulation of DNA-templated transcription"/>
    <property type="evidence" value="ECO:0000315"/>
    <property type="project" value="WormBase"/>
</dbReference>
<dbReference type="GO" id="GO:0045944">
    <property type="term" value="P:positive regulation of transcription by RNA polymerase II"/>
    <property type="evidence" value="ECO:0000315"/>
    <property type="project" value="UniProtKB"/>
</dbReference>
<dbReference type="GO" id="GO:0030516">
    <property type="term" value="P:regulation of axon extension"/>
    <property type="evidence" value="ECO:0000315"/>
    <property type="project" value="WormBase"/>
</dbReference>
<dbReference type="GO" id="GO:1902667">
    <property type="term" value="P:regulation of axon guidance"/>
    <property type="evidence" value="ECO:0000315"/>
    <property type="project" value="WormBase"/>
</dbReference>
<dbReference type="GO" id="GO:0006355">
    <property type="term" value="P:regulation of DNA-templated transcription"/>
    <property type="evidence" value="ECO:0000250"/>
    <property type="project" value="WormBase"/>
</dbReference>
<dbReference type="GO" id="GO:0045664">
    <property type="term" value="P:regulation of neuron differentiation"/>
    <property type="evidence" value="ECO:0000315"/>
    <property type="project" value="WormBase"/>
</dbReference>
<dbReference type="GO" id="GO:0006357">
    <property type="term" value="P:regulation of transcription by RNA polymerase II"/>
    <property type="evidence" value="ECO:0000318"/>
    <property type="project" value="GO_Central"/>
</dbReference>
<dbReference type="GO" id="GO:0040040">
    <property type="term" value="P:thermosensory behavior"/>
    <property type="evidence" value="ECO:0000315"/>
    <property type="project" value="WormBase"/>
</dbReference>
<dbReference type="GO" id="GO:0043052">
    <property type="term" value="P:thermotaxis"/>
    <property type="evidence" value="ECO:0000315"/>
    <property type="project" value="WormBase"/>
</dbReference>
<dbReference type="CDD" id="cd00086">
    <property type="entry name" value="homeodomain"/>
    <property type="match status" value="1"/>
</dbReference>
<dbReference type="CDD" id="cd08368">
    <property type="entry name" value="LIM"/>
    <property type="match status" value="1"/>
</dbReference>
<dbReference type="FunFam" id="2.10.110.10:FF:000136">
    <property type="entry name" value="LIM domain family"/>
    <property type="match status" value="1"/>
</dbReference>
<dbReference type="FunFam" id="1.10.10.60:FF:000027">
    <property type="entry name" value="LIM/homeobox protein Lhx9"/>
    <property type="match status" value="1"/>
</dbReference>
<dbReference type="FunFam" id="2.10.110.10:FF:000158">
    <property type="entry name" value="LIM/homeobox protein ttx-3"/>
    <property type="match status" value="1"/>
</dbReference>
<dbReference type="Gene3D" id="2.10.110.10">
    <property type="entry name" value="Cysteine Rich Protein"/>
    <property type="match status" value="2"/>
</dbReference>
<dbReference type="Gene3D" id="1.10.10.60">
    <property type="entry name" value="Homeodomain-like"/>
    <property type="match status" value="1"/>
</dbReference>
<dbReference type="InterPro" id="IPR001356">
    <property type="entry name" value="HD"/>
</dbReference>
<dbReference type="InterPro" id="IPR017970">
    <property type="entry name" value="Homeobox_CS"/>
</dbReference>
<dbReference type="InterPro" id="IPR009057">
    <property type="entry name" value="Homeodomain-like_sf"/>
</dbReference>
<dbReference type="InterPro" id="IPR050453">
    <property type="entry name" value="LIM_Homeobox_TF"/>
</dbReference>
<dbReference type="InterPro" id="IPR001781">
    <property type="entry name" value="Znf_LIM"/>
</dbReference>
<dbReference type="PANTHER" id="PTHR24208">
    <property type="entry name" value="LIM/HOMEOBOX PROTEIN LHX"/>
    <property type="match status" value="1"/>
</dbReference>
<dbReference type="PANTHER" id="PTHR24208:SF168">
    <property type="entry name" value="PROTEIN APTEROUS"/>
    <property type="match status" value="1"/>
</dbReference>
<dbReference type="Pfam" id="PF00046">
    <property type="entry name" value="Homeodomain"/>
    <property type="match status" value="1"/>
</dbReference>
<dbReference type="Pfam" id="PF00412">
    <property type="entry name" value="LIM"/>
    <property type="match status" value="2"/>
</dbReference>
<dbReference type="SMART" id="SM00389">
    <property type="entry name" value="HOX"/>
    <property type="match status" value="1"/>
</dbReference>
<dbReference type="SMART" id="SM00132">
    <property type="entry name" value="LIM"/>
    <property type="match status" value="2"/>
</dbReference>
<dbReference type="SUPFAM" id="SSF57716">
    <property type="entry name" value="Glucocorticoid receptor-like (DNA-binding domain)"/>
    <property type="match status" value="2"/>
</dbReference>
<dbReference type="SUPFAM" id="SSF46689">
    <property type="entry name" value="Homeodomain-like"/>
    <property type="match status" value="1"/>
</dbReference>
<dbReference type="PROSITE" id="PS00027">
    <property type="entry name" value="HOMEOBOX_1"/>
    <property type="match status" value="1"/>
</dbReference>
<dbReference type="PROSITE" id="PS50071">
    <property type="entry name" value="HOMEOBOX_2"/>
    <property type="match status" value="1"/>
</dbReference>
<dbReference type="PROSITE" id="PS00478">
    <property type="entry name" value="LIM_DOMAIN_1"/>
    <property type="match status" value="2"/>
</dbReference>
<dbReference type="PROSITE" id="PS50023">
    <property type="entry name" value="LIM_DOMAIN_2"/>
    <property type="match status" value="2"/>
</dbReference>
<comment type="function">
    <text evidence="4 5 7 8 9 14">Transcription factor (PubMed:15177025, PubMed:19386265). Binds to a sequence motif, 5'-TTATTGGCTTCGTTAA-3', which may be involved in AIY interneuron function, in the regulatory elements of target genes; binding is more efficient, in vitro, together with homeobox protein ceh-10 (PubMed:15177025). Required for specification of the AIA and AIY interneurons and the NSM neurons (PubMed:11493519, PubMed:24353061). Positively regulates the expression of a number of genes including ceh-10, ceh-23, kal-1, hen-1, ser-2, unc-17 and sra-11 in AIY neurons, and cat-4, flp-4, bas-1, ptps-1 and mgl-1 in NSM neurons (PubMed:11493519, PubMed:15177025, PubMed:19386265, PubMed:24353061). In concert with WNT/beta-catenin signaling, initiates expression of homeobox ceh-10 in AIY, but not in the sister cells, SMDD motor neurons (PubMed:19386265). Also acts in an autoregulatory feedback loop to maintain its own expression (PubMed:19386265, PubMed:9292724). Plays a role in the thermotactic response, olfactory imprinting, regulation of longevity, control of dauer formation and axon outgrowth and pathfinding (PubMed:16051801, PubMed:21055415, PubMed:24353061, PubMed:9292724). Not required for normal chemosensory behavior (PubMed:9292724).</text>
</comment>
<comment type="subcellular location">
    <subcellularLocation>
        <location evidence="1 4 9">Nucleus</location>
    </subcellularLocation>
    <subcellularLocation>
        <location evidence="4 9">Perikaryon</location>
    </subcellularLocation>
    <subcellularLocation>
        <location evidence="4 9">Cell projection</location>
        <location evidence="4 9">Axon</location>
    </subcellularLocation>
</comment>
<comment type="alternative products">
    <event type="alternative splicing"/>
    <isoform>
        <id>G5EE86-1</id>
        <name evidence="9 10">a</name>
        <sequence type="displayed"/>
    </isoform>
    <isoform>
        <id>G5EE86-2</id>
        <name evidence="10">b</name>
        <sequence type="described" ref="VSP_054579"/>
    </isoform>
</comment>
<comment type="tissue specificity">
    <text evidence="4 8 9">Expressed in the AIA, AIN and AIY interneurons, and in the NSM neurons. Expressed also in ADL and ASI sensory neurons in 60-70% of L2 larvae. Expression is also detected in head muscles of embryos and some early larvae but not late larvae or adults.</text>
</comment>
<comment type="developmental stage">
    <text evidence="4 6 8 9">First expressed at the end of embryo gastrulation in a pair of ventral neuroblasts, the left/right symmetric pair of SMDD/AIY mother cells, ABpl/rpapaaa, also known as NB(SMDD/AIY) (PubMed:19386265). Transiently expressed in SMDD motor neurons immediately after cleavage of the SMDD/AIY mother cells and then expression disappears during embryonic elongation (PubMed:19386265). Expressed during embryogenesis and persists through to adulthood in AIY interneurons (PubMed:11493519, PubMed:19386265). Expressed at L1 stage and through adulthood in AIA and NSM neurons (PubMed:11493519, PubMed:24353061). Expression is detected in head muscles of all 1.5 and 2-fold embryos, 47% of embryos just before hatching and 6% of early larvae with no expression in head muscles of late stage larvae or adults (PubMed:9292724).</text>
</comment>
<comment type="disruption phenotype">
    <text evidence="4 5 7 8 9">Animals are cryophilic and move toward lower temperatures irrespective of cultivation temperature in contrast to wild-type animals which move toward their cultivation temperature when placed on a temperature gradient. AIA and AIY interneurons display defective neurite morphology. NSM neurons display loss of or reduced expression of a number of terminal identity markers including cat-4, flp-4, bas-1, ptps-1 and mgl-1. Reduced expression of ceh-23, kal-1, C36B7.7, ser-2, unc-17 and sra-11 is observed in AIY interneurons. Preexposure to odorants fails to leave an olfactory imprint. Mean lifespan is reduced by 10% with decreased pharyngeal pumping and increased intestinal autofluorescence caused by lysosomal deposits of lipofuscin, indicative of cellular damage and aging. Formation of very few dauers in starvation conditions. No defects observed in brood size, egg number or chemotactic behavior toward volatile chemicals.</text>
</comment>
<reference evidence="13 15" key="1">
    <citation type="journal article" date="1997" name="Neuron">
        <title>Regulation of interneuron function in the C. elegans thermoregulatory pathway by the ttx-3 LIM homeobox gene.</title>
        <authorList>
            <person name="Hobert O."/>
            <person name="Mori I."/>
            <person name="Yamashita Y."/>
            <person name="Honda H."/>
            <person name="Ohshima Y."/>
            <person name="Liu Y."/>
            <person name="Ruvkun G."/>
        </authorList>
    </citation>
    <scope>NUCLEOTIDE SEQUENCE [MRNA] (ISOFORM A)</scope>
    <scope>FUNCTION</scope>
    <scope>SUBCELLULAR LOCATION</scope>
    <scope>TISSUE SPECIFICITY</scope>
    <scope>DEVELOPMENTAL STAGE</scope>
    <scope>DISRUPTION PHENOTYPE</scope>
    <source>
        <strain evidence="15">Bristol N2</strain>
    </source>
</reference>
<reference evidence="16" key="2">
    <citation type="journal article" date="1998" name="Science">
        <title>Genome sequence of the nematode C. elegans: a platform for investigating biology.</title>
        <authorList>
            <consortium name="The C. elegans sequencing consortium"/>
        </authorList>
    </citation>
    <scope>NUCLEOTIDE SEQUENCE [LARGE SCALE GENOMIC DNA]</scope>
    <source>
        <strain evidence="16">Bristol N2</strain>
    </source>
</reference>
<reference evidence="13" key="3">
    <citation type="journal article" date="2001" name="Development">
        <title>A regulatory cascade of three homeobox genes, ceh-10, ttx-3 and ceh-23, controls cell fate specification of a defined interneuron class in C. elegans.</title>
        <authorList>
            <person name="Altun-Gultekin Z."/>
            <person name="Andachi Y."/>
            <person name="Tsalik E.L."/>
            <person name="Pilgrim D."/>
            <person name="Kohara Y."/>
            <person name="Hobert O."/>
        </authorList>
    </citation>
    <scope>FUNCTION</scope>
    <scope>SUBCELLULAR LOCATION</scope>
    <scope>TISSUE SPECIFICITY</scope>
    <scope>DEVELOPMENTAL STAGE</scope>
    <scope>DISRUPTION PHENOTYPE</scope>
    <scope>MUTAGENESIS OF PHE-340</scope>
</reference>
<reference key="4">
    <citation type="journal article" date="2004" name="Dev. Cell">
        <title>Genomic cis-regulatory architecture and trans-acting regulators of a single interneuron-specific gene battery in C. elegans.</title>
        <authorList>
            <person name="Wenick A.S."/>
            <person name="Hobert O."/>
        </authorList>
    </citation>
    <scope>FUNCTION</scope>
</reference>
<reference evidence="13" key="5">
    <citation type="journal article" date="2005" name="Science">
        <title>An interneuronal chemoreceptor required for olfactory imprinting in C. elegans.</title>
        <authorList>
            <person name="Remy J.J."/>
            <person name="Hobert O."/>
        </authorList>
    </citation>
    <scope>FUNCTION</scope>
    <scope>DISRUPTION PHENOTYPE</scope>
</reference>
<reference key="6">
    <citation type="journal article" date="2009" name="Dev. Cell">
        <title>Linking asymmetric cell division to the terminal differentiation program of postmitotic neurons in C. elegans.</title>
        <authorList>
            <person name="Bertrand V."/>
            <person name="Hobert O."/>
        </authorList>
    </citation>
    <scope>FUNCTION</scope>
    <scope>DEVELOPMENTAL STAGE</scope>
</reference>
<reference evidence="13" key="7">
    <citation type="journal article" date="2010" name="Mech. Ageing Dev.">
        <title>Regulation of longevity by genes required for the functions of AIY interneuron in nematode Caenorhabditis elegans.</title>
        <authorList>
            <person name="Shen L."/>
            <person name="Hu Y."/>
            <person name="Cai T."/>
            <person name="Lin X."/>
            <person name="Wang D."/>
        </authorList>
    </citation>
    <scope>FUNCTION</scope>
    <scope>DISRUPTION PHENOTYPE</scope>
    <source>
        <strain evidence="7">Bristol N2</strain>
    </source>
</reference>
<reference evidence="13" key="8">
    <citation type="journal article" date="2014" name="Development">
        <title>The LIM and POU homeobox genes ttx-3 and unc-86 act as terminal selectors in distinct cholinergic and serotonergic neuron types.</title>
        <authorList>
            <person name="Zhang F."/>
            <person name="Bhattacharya A."/>
            <person name="Nelson J.C."/>
            <person name="Abe N."/>
            <person name="Gordon P."/>
            <person name="Lloret-Fernandez C."/>
            <person name="Maicas M."/>
            <person name="Flames N."/>
            <person name="Mann R.S."/>
            <person name="Colon-Ramos D.A."/>
            <person name="Hobert O."/>
        </authorList>
    </citation>
    <scope>FUNCTION</scope>
    <scope>TISSUE SPECIFICITY</scope>
    <scope>DEVELOPMENTAL STAGE</scope>
    <scope>DISRUPTION PHENOTYPE</scope>
</reference>
<gene>
    <name evidence="16 17" type="primary">ttx-3</name>
    <name type="ORF">C40H5.5</name>
</gene>
<organism>
    <name type="scientific">Caenorhabditis elegans</name>
    <dbReference type="NCBI Taxonomy" id="6239"/>
    <lineage>
        <taxon>Eukaryota</taxon>
        <taxon>Metazoa</taxon>
        <taxon>Ecdysozoa</taxon>
        <taxon>Nematoda</taxon>
        <taxon>Chromadorea</taxon>
        <taxon>Rhabditida</taxon>
        <taxon>Rhabditina</taxon>
        <taxon>Rhabditomorpha</taxon>
        <taxon>Rhabditoidea</taxon>
        <taxon>Rhabditidae</taxon>
        <taxon>Peloderinae</taxon>
        <taxon>Caenorhabditis</taxon>
    </lineage>
</organism>